<name>Y350_HAEIN</name>
<dbReference type="EMBL" id="X57315">
    <property type="protein sequence ID" value="CAA40569.1"/>
    <property type="molecule type" value="Genomic_DNA"/>
</dbReference>
<dbReference type="EMBL" id="L42023">
    <property type="protein sequence ID" value="AAC22011.1"/>
    <property type="molecule type" value="Genomic_DNA"/>
</dbReference>
<dbReference type="PIR" id="D64149">
    <property type="entry name" value="D64149"/>
</dbReference>
<dbReference type="RefSeq" id="NP_438514.1">
    <property type="nucleotide sequence ID" value="NC_000907.1"/>
</dbReference>
<dbReference type="SMR" id="P24326"/>
<dbReference type="STRING" id="71421.HI_0350"/>
<dbReference type="EnsemblBacteria" id="AAC22011">
    <property type="protein sequence ID" value="AAC22011"/>
    <property type="gene ID" value="HI_0350"/>
</dbReference>
<dbReference type="KEGG" id="hin:HI_0350"/>
<dbReference type="PATRIC" id="fig|71421.8.peg.369"/>
<dbReference type="eggNOG" id="COG2814">
    <property type="taxonomic scope" value="Bacteria"/>
</dbReference>
<dbReference type="HOGENOM" id="CLU_029352_1_2_6"/>
<dbReference type="OrthoDB" id="9787815at2"/>
<dbReference type="PhylomeDB" id="P24326"/>
<dbReference type="BioCyc" id="HINF71421:G1GJ1-366-MONOMER"/>
<dbReference type="Proteomes" id="UP000000579">
    <property type="component" value="Chromosome"/>
</dbReference>
<dbReference type="GO" id="GO:0005886">
    <property type="term" value="C:plasma membrane"/>
    <property type="evidence" value="ECO:0007669"/>
    <property type="project" value="UniProtKB-SubCell"/>
</dbReference>
<dbReference type="GO" id="GO:0022857">
    <property type="term" value="F:transmembrane transporter activity"/>
    <property type="evidence" value="ECO:0007669"/>
    <property type="project" value="InterPro"/>
</dbReference>
<dbReference type="FunFam" id="1.20.1250.20:FF:000613">
    <property type="entry name" value="AmpG protein"/>
    <property type="match status" value="1"/>
</dbReference>
<dbReference type="Gene3D" id="1.20.1250.20">
    <property type="entry name" value="MFS general substrate transporter like domains"/>
    <property type="match status" value="1"/>
</dbReference>
<dbReference type="InterPro" id="IPR004752">
    <property type="entry name" value="AmpG_permease/AT-1"/>
</dbReference>
<dbReference type="InterPro" id="IPR011701">
    <property type="entry name" value="MFS"/>
</dbReference>
<dbReference type="InterPro" id="IPR036259">
    <property type="entry name" value="MFS_trans_sf"/>
</dbReference>
<dbReference type="NCBIfam" id="TIGR00901">
    <property type="entry name" value="2A0125"/>
    <property type="match status" value="1"/>
</dbReference>
<dbReference type="PANTHER" id="PTHR12778:SF10">
    <property type="entry name" value="MAJOR FACILITATOR SUPERFAMILY DOMAIN-CONTAINING PROTEIN 3"/>
    <property type="match status" value="1"/>
</dbReference>
<dbReference type="PANTHER" id="PTHR12778">
    <property type="entry name" value="SOLUTE CARRIER FAMILY 33 ACETYL-COA TRANSPORTER -RELATED"/>
    <property type="match status" value="1"/>
</dbReference>
<dbReference type="Pfam" id="PF07690">
    <property type="entry name" value="MFS_1"/>
    <property type="match status" value="1"/>
</dbReference>
<dbReference type="SUPFAM" id="SSF103473">
    <property type="entry name" value="MFS general substrate transporter"/>
    <property type="match status" value="1"/>
</dbReference>
<reference key="1">
    <citation type="journal article" date="1991" name="Mol. Microbiol.">
        <title>Molecular analysis of a complex locus from Haemophilus influenzae involved in phase-variable lipopolysaccharide biosynthesis.</title>
        <authorList>
            <person name="Maskell D.J."/>
            <person name="Szabo M.J."/>
            <person name="Butler P.D."/>
            <person name="Williams A.E."/>
            <person name="Moxon E.R."/>
        </authorList>
    </citation>
    <scope>NUCLEOTIDE SEQUENCE [GENOMIC DNA]</scope>
    <source>
        <strain>RM 7004 / Serotype B</strain>
    </source>
</reference>
<reference key="2">
    <citation type="journal article" date="1995" name="Science">
        <title>Whole-genome random sequencing and assembly of Haemophilus influenzae Rd.</title>
        <authorList>
            <person name="Fleischmann R.D."/>
            <person name="Adams M.D."/>
            <person name="White O."/>
            <person name="Clayton R.A."/>
            <person name="Kirkness E.F."/>
            <person name="Kerlavage A.R."/>
            <person name="Bult C.J."/>
            <person name="Tomb J.-F."/>
            <person name="Dougherty B.A."/>
            <person name="Merrick J.M."/>
            <person name="McKenney K."/>
            <person name="Sutton G.G."/>
            <person name="FitzHugh W."/>
            <person name="Fields C.A."/>
            <person name="Gocayne J.D."/>
            <person name="Scott J.D."/>
            <person name="Shirley R."/>
            <person name="Liu L.-I."/>
            <person name="Glodek A."/>
            <person name="Kelley J.M."/>
            <person name="Weidman J.F."/>
            <person name="Phillips C.A."/>
            <person name="Spriggs T."/>
            <person name="Hedblom E."/>
            <person name="Cotton M.D."/>
            <person name="Utterback T.R."/>
            <person name="Hanna M.C."/>
            <person name="Nguyen D.T."/>
            <person name="Saudek D.M."/>
            <person name="Brandon R.C."/>
            <person name="Fine L.D."/>
            <person name="Fritchman J.L."/>
            <person name="Fuhrmann J.L."/>
            <person name="Geoghagen N.S.M."/>
            <person name="Gnehm C.L."/>
            <person name="McDonald L.A."/>
            <person name="Small K.V."/>
            <person name="Fraser C.M."/>
            <person name="Smith H.O."/>
            <person name="Venter J.C."/>
        </authorList>
    </citation>
    <scope>NUCLEOTIDE SEQUENCE [LARGE SCALE GENOMIC DNA]</scope>
    <source>
        <strain>ATCC 51907 / DSM 11121 / KW20 / Rd</strain>
    </source>
</reference>
<protein>
    <recommendedName>
        <fullName>Uncharacterized protein HI_0350</fullName>
    </recommendedName>
    <alternativeName>
        <fullName>ORF3</fullName>
    </alternativeName>
</protein>
<evidence type="ECO:0000255" key="1"/>
<evidence type="ECO:0000305" key="2"/>
<gene>
    <name type="ordered locus">HI_0350</name>
</gene>
<organism>
    <name type="scientific">Haemophilus influenzae (strain ATCC 51907 / DSM 11121 / KW20 / Rd)</name>
    <dbReference type="NCBI Taxonomy" id="71421"/>
    <lineage>
        <taxon>Bacteria</taxon>
        <taxon>Pseudomonadati</taxon>
        <taxon>Pseudomonadota</taxon>
        <taxon>Gammaproteobacteria</taxon>
        <taxon>Pasteurellales</taxon>
        <taxon>Pasteurellaceae</taxon>
        <taxon>Haemophilus</taxon>
    </lineage>
</organism>
<sequence length="425" mass="47354">MSNSLSSQIFTRKMLICAFTGFNSGLPLFVLSQMLPVWLTDKHLSIELIGAVTGVMLPYGLKFLWAPLLDRYFPSFLGRRRSWMLLSQVALLILLYIISLFDPLTQLGTVANIALLIAFFSATQDIVLDAYRREILSDHELGLGNTIHINAYRIAGLIPGGLSLYLAAIYPWETVFLWTALCMLAGIFMTLFLAKEPKIDMQQTNQPFYQAFWIPLQEFFQRKGVIQAIGFLLFLFLYKFGDSFATTLQTKFIYDMGFSKEDIAIVVKSTALWSSILSGLAGGMIMLKLGINRALWLFGLVQMVTIGGFIWLAAFGHFDVITSAELWKLGVVIAAEYIGVGLGTAAFVAFMARESNPLYTATQLALFTSLSALPSKVLGILSGYVVGAVGYYQYFWFCLFLAIPGMLCLFWVAPLKQENNKTSSV</sequence>
<comment type="subcellular location">
    <subcellularLocation>
        <location evidence="2">Cell inner membrane</location>
        <topology evidence="2">Multi-pass membrane protein</topology>
    </subcellularLocation>
</comment>
<comment type="similarity">
    <text evidence="2">To E.coli AmpG and yeast YBR220c.</text>
</comment>
<keyword id="KW-0997">Cell inner membrane</keyword>
<keyword id="KW-1003">Cell membrane</keyword>
<keyword id="KW-0472">Membrane</keyword>
<keyword id="KW-1185">Reference proteome</keyword>
<keyword id="KW-0812">Transmembrane</keyword>
<keyword id="KW-1133">Transmembrane helix</keyword>
<keyword id="KW-0813">Transport</keyword>
<proteinExistence type="predicted"/>
<accession>P24326</accession>
<feature type="chain" id="PRO_0000077914" description="Uncharacterized protein HI_0350">
    <location>
        <begin position="1"/>
        <end position="425"/>
    </location>
</feature>
<feature type="transmembrane region" description="Helical" evidence="1">
    <location>
        <begin position="15"/>
        <end position="35"/>
    </location>
</feature>
<feature type="transmembrane region" description="Helical" evidence="1">
    <location>
        <begin position="48"/>
        <end position="68"/>
    </location>
</feature>
<feature type="transmembrane region" description="Helical" evidence="1">
    <location>
        <begin position="84"/>
        <end position="104"/>
    </location>
</feature>
<feature type="transmembrane region" description="Helical" evidence="1">
    <location>
        <begin position="107"/>
        <end position="127"/>
    </location>
</feature>
<feature type="transmembrane region" description="Helical" evidence="1">
    <location>
        <begin position="149"/>
        <end position="169"/>
    </location>
</feature>
<feature type="transmembrane region" description="Helical" evidence="1">
    <location>
        <begin position="174"/>
        <end position="194"/>
    </location>
</feature>
<feature type="transmembrane region" description="Helical" evidence="1">
    <location>
        <begin position="225"/>
        <end position="245"/>
    </location>
</feature>
<feature type="transmembrane region" description="Helical" evidence="1">
    <location>
        <begin position="271"/>
        <end position="291"/>
    </location>
</feature>
<feature type="transmembrane region" description="Helical" evidence="1">
    <location>
        <begin position="295"/>
        <end position="315"/>
    </location>
</feature>
<feature type="transmembrane region" description="Helical" evidence="1">
    <location>
        <begin position="331"/>
        <end position="351"/>
    </location>
</feature>
<feature type="transmembrane region" description="Helical" evidence="1">
    <location>
        <begin position="370"/>
        <end position="390"/>
    </location>
</feature>
<feature type="transmembrane region" description="Helical" evidence="1">
    <location>
        <begin position="395"/>
        <end position="415"/>
    </location>
</feature>
<feature type="sequence variant" description="In strain: RM 7004.">
    <original>L</original>
    <variation>F</variation>
    <location>
        <position position="5"/>
    </location>
</feature>
<feature type="sequence variant" description="In strain: RM 7004.">
    <original>S</original>
    <variation>L</variation>
    <location>
        <position position="32"/>
    </location>
</feature>
<feature type="sequence variant" description="In strain: RM 7004.">
    <original>A</original>
    <variation>S</variation>
    <location>
        <position position="271"/>
    </location>
</feature>
<feature type="sequence variant" description="In strain: RM 7004.">
    <original>A</original>
    <variation>S</variation>
    <location>
        <position position="313"/>
    </location>
</feature>
<feature type="sequence variant" description="In strain: RM 7004.">
    <original>L</original>
    <variation>W</variation>
    <location>
        <position position="415"/>
    </location>
</feature>
<feature type="sequence variant" description="In strain: RM 7004.">
    <original>E</original>
    <variation>K</variation>
    <location>
        <position position="418"/>
    </location>
</feature>